<protein>
    <recommendedName>
        <fullName evidence="1">Photosystem II reaction center protein H</fullName>
        <shortName evidence="1">PSII-H</shortName>
    </recommendedName>
</protein>
<proteinExistence type="inferred from homology"/>
<accession>Q3AMZ3</accession>
<evidence type="ECO:0000255" key="1">
    <source>
        <dbReference type="HAMAP-Rule" id="MF_00752"/>
    </source>
</evidence>
<dbReference type="EMBL" id="CP000110">
    <property type="protein sequence ID" value="ABB34039.1"/>
    <property type="molecule type" value="Genomic_DNA"/>
</dbReference>
<dbReference type="RefSeq" id="WP_006849996.1">
    <property type="nucleotide sequence ID" value="NC_007516.1"/>
</dbReference>
<dbReference type="SMR" id="Q3AMZ3"/>
<dbReference type="STRING" id="110662.Syncc9605_0263"/>
<dbReference type="KEGG" id="syd:Syncc9605_0263"/>
<dbReference type="eggNOG" id="ENOG50332MV">
    <property type="taxonomic scope" value="Bacteria"/>
</dbReference>
<dbReference type="HOGENOM" id="CLU_190203_0_0_3"/>
<dbReference type="OrthoDB" id="427121at2"/>
<dbReference type="GO" id="GO:0009523">
    <property type="term" value="C:photosystem II"/>
    <property type="evidence" value="ECO:0007669"/>
    <property type="project" value="UniProtKB-KW"/>
</dbReference>
<dbReference type="GO" id="GO:0031676">
    <property type="term" value="C:plasma membrane-derived thylakoid membrane"/>
    <property type="evidence" value="ECO:0007669"/>
    <property type="project" value="UniProtKB-SubCell"/>
</dbReference>
<dbReference type="GO" id="GO:0042301">
    <property type="term" value="F:phosphate ion binding"/>
    <property type="evidence" value="ECO:0007669"/>
    <property type="project" value="InterPro"/>
</dbReference>
<dbReference type="GO" id="GO:0015979">
    <property type="term" value="P:photosynthesis"/>
    <property type="evidence" value="ECO:0007669"/>
    <property type="project" value="UniProtKB-UniRule"/>
</dbReference>
<dbReference type="GO" id="GO:0050821">
    <property type="term" value="P:protein stabilization"/>
    <property type="evidence" value="ECO:0007669"/>
    <property type="project" value="InterPro"/>
</dbReference>
<dbReference type="Gene3D" id="1.20.5.880">
    <property type="entry name" value="Photosystem II reaction center protein H"/>
    <property type="match status" value="1"/>
</dbReference>
<dbReference type="HAMAP" id="MF_00752">
    <property type="entry name" value="PSII_PsbH"/>
    <property type="match status" value="1"/>
</dbReference>
<dbReference type="InterPro" id="IPR001056">
    <property type="entry name" value="PSII_PsbH"/>
</dbReference>
<dbReference type="InterPro" id="IPR036863">
    <property type="entry name" value="PSII_PsbH_sf"/>
</dbReference>
<dbReference type="NCBIfam" id="NF002728">
    <property type="entry name" value="PRK02624.1"/>
    <property type="match status" value="1"/>
</dbReference>
<dbReference type="PANTHER" id="PTHR34469">
    <property type="entry name" value="PHOTOSYSTEM II REACTION CENTER PROTEIN H"/>
    <property type="match status" value="1"/>
</dbReference>
<dbReference type="PANTHER" id="PTHR34469:SF4">
    <property type="entry name" value="PHOTOSYSTEM II REACTION CENTER PROTEIN H"/>
    <property type="match status" value="1"/>
</dbReference>
<dbReference type="Pfam" id="PF00737">
    <property type="entry name" value="PsbH"/>
    <property type="match status" value="1"/>
</dbReference>
<dbReference type="SUPFAM" id="SSF161025">
    <property type="entry name" value="Photosystem II 10 kDa phosphoprotein PsbH"/>
    <property type="match status" value="1"/>
</dbReference>
<organism>
    <name type="scientific">Synechococcus sp. (strain CC9605)</name>
    <dbReference type="NCBI Taxonomy" id="110662"/>
    <lineage>
        <taxon>Bacteria</taxon>
        <taxon>Bacillati</taxon>
        <taxon>Cyanobacteriota</taxon>
        <taxon>Cyanophyceae</taxon>
        <taxon>Synechococcales</taxon>
        <taxon>Synechococcaceae</taxon>
        <taxon>Synechococcus</taxon>
    </lineage>
</organism>
<keyword id="KW-0472">Membrane</keyword>
<keyword id="KW-0602">Photosynthesis</keyword>
<keyword id="KW-0604">Photosystem II</keyword>
<keyword id="KW-0793">Thylakoid</keyword>
<keyword id="KW-0812">Transmembrane</keyword>
<keyword id="KW-1133">Transmembrane helix</keyword>
<gene>
    <name evidence="1" type="primary">psbH</name>
    <name type="ordered locus">Syncc9605_0263</name>
</gene>
<name>PSBH_SYNSC</name>
<sequence length="66" mass="7391">MAQRTRLGDLLRPLNSEYGKVVPGWGTTPVMGIFMVLFLVFLLVILQLYNKSLILEGINVNWNGLG</sequence>
<reference key="1">
    <citation type="submission" date="2005-07" db="EMBL/GenBank/DDBJ databases">
        <title>Complete sequence of Synechococcus sp. CC9605.</title>
        <authorList>
            <consortium name="US DOE Joint Genome Institute"/>
            <person name="Copeland A."/>
            <person name="Lucas S."/>
            <person name="Lapidus A."/>
            <person name="Barry K."/>
            <person name="Detter J.C."/>
            <person name="Glavina T."/>
            <person name="Hammon N."/>
            <person name="Israni S."/>
            <person name="Pitluck S."/>
            <person name="Schmutz J."/>
            <person name="Martinez M."/>
            <person name="Larimer F."/>
            <person name="Land M."/>
            <person name="Kyrpides N."/>
            <person name="Ivanova N."/>
            <person name="Richardson P."/>
        </authorList>
    </citation>
    <scope>NUCLEOTIDE SEQUENCE [LARGE SCALE GENOMIC DNA]</scope>
    <source>
        <strain>CC9605</strain>
    </source>
</reference>
<feature type="chain" id="PRO_1000046599" description="Photosystem II reaction center protein H">
    <location>
        <begin position="1"/>
        <end position="66"/>
    </location>
</feature>
<feature type="transmembrane region" description="Helical" evidence="1">
    <location>
        <begin position="29"/>
        <end position="49"/>
    </location>
</feature>
<comment type="function">
    <text evidence="1">One of the components of the core complex of photosystem II (PSII), required for its stability and/or assembly. PSII is a light-driven water:plastoquinone oxidoreductase that uses light energy to abstract electrons from H(2)O, generating O(2) and a proton gradient subsequently used for ATP formation. It consists of a core antenna complex that captures photons, and an electron transfer chain that converts photonic excitation into a charge separation.</text>
</comment>
<comment type="subunit">
    <text evidence="1">PSII is composed of 1 copy each of membrane proteins PsbA, PsbB, PsbC, PsbD, PsbE, PsbF, PsbH, PsbI, PsbJ, PsbK, PsbL, PsbM, PsbT, PsbX, PsbY, PsbZ, Psb30/Ycf12, peripheral proteins PsbO, CyanoQ (PsbQ), PsbU, PsbV and a large number of cofactors. It forms dimeric complexes.</text>
</comment>
<comment type="subcellular location">
    <subcellularLocation>
        <location evidence="1">Cellular thylakoid membrane</location>
        <topology evidence="1">Single-pass membrane protein</topology>
    </subcellularLocation>
</comment>
<comment type="similarity">
    <text evidence="1">Belongs to the PsbH family.</text>
</comment>